<dbReference type="EMBL" id="CP000901">
    <property type="protein sequence ID" value="ABX86930.1"/>
    <property type="molecule type" value="Genomic_DNA"/>
</dbReference>
<dbReference type="RefSeq" id="WP_002210666.1">
    <property type="nucleotide sequence ID" value="NZ_CP009935.1"/>
</dbReference>
<dbReference type="SMR" id="A9R9A9"/>
<dbReference type="KEGG" id="ypg:YpAngola_A2333"/>
<dbReference type="PATRIC" id="fig|349746.12.peg.3345"/>
<dbReference type="Gene3D" id="3.10.450.50">
    <property type="match status" value="1"/>
</dbReference>
<dbReference type="HAMAP" id="MF_00612">
    <property type="entry name" value="UPF0225"/>
    <property type="match status" value="1"/>
</dbReference>
<dbReference type="InterPro" id="IPR032710">
    <property type="entry name" value="NTF2-like_dom_sf"/>
</dbReference>
<dbReference type="InterPro" id="IPR004027">
    <property type="entry name" value="SEC_C_motif"/>
</dbReference>
<dbReference type="InterPro" id="IPR023006">
    <property type="entry name" value="UPF0225"/>
</dbReference>
<dbReference type="InterPro" id="IPR048469">
    <property type="entry name" value="YchJ-like_M"/>
</dbReference>
<dbReference type="NCBIfam" id="NF002449">
    <property type="entry name" value="PRK01617.1"/>
    <property type="match status" value="1"/>
</dbReference>
<dbReference type="NCBIfam" id="NF002486">
    <property type="entry name" value="PRK01752.1"/>
    <property type="match status" value="1"/>
</dbReference>
<dbReference type="PANTHER" id="PTHR33747:SF1">
    <property type="entry name" value="ADENYLATE CYCLASE-ASSOCIATED CAP C-TERMINAL DOMAIN-CONTAINING PROTEIN"/>
    <property type="match status" value="1"/>
</dbReference>
<dbReference type="PANTHER" id="PTHR33747">
    <property type="entry name" value="UPF0225 PROTEIN SCO1677"/>
    <property type="match status" value="1"/>
</dbReference>
<dbReference type="Pfam" id="PF02810">
    <property type="entry name" value="SEC-C"/>
    <property type="match status" value="2"/>
</dbReference>
<dbReference type="Pfam" id="PF17775">
    <property type="entry name" value="YchJ_M-like"/>
    <property type="match status" value="1"/>
</dbReference>
<dbReference type="SUPFAM" id="SSF54427">
    <property type="entry name" value="NTF2-like"/>
    <property type="match status" value="1"/>
</dbReference>
<dbReference type="SUPFAM" id="SSF103642">
    <property type="entry name" value="Sec-C motif"/>
    <property type="match status" value="1"/>
</dbReference>
<reference key="1">
    <citation type="journal article" date="2010" name="J. Bacteriol.">
        <title>Genome sequence of the deep-rooted Yersinia pestis strain Angola reveals new insights into the evolution and pangenome of the plague bacterium.</title>
        <authorList>
            <person name="Eppinger M."/>
            <person name="Worsham P.L."/>
            <person name="Nikolich M.P."/>
            <person name="Riley D.R."/>
            <person name="Sebastian Y."/>
            <person name="Mou S."/>
            <person name="Achtman M."/>
            <person name="Lindler L.E."/>
            <person name="Ravel J."/>
        </authorList>
    </citation>
    <scope>NUCLEOTIDE SEQUENCE [LARGE SCALE GENOMIC DNA]</scope>
    <source>
        <strain>Angola</strain>
    </source>
</reference>
<gene>
    <name type="ordered locus">YpAngola_A2333</name>
</gene>
<protein>
    <recommendedName>
        <fullName evidence="1">UPF0225 protein YpAngola_A2333</fullName>
    </recommendedName>
</protein>
<comment type="similarity">
    <text evidence="1">Belongs to the UPF0225 family.</text>
</comment>
<accession>A9R9A9</accession>
<name>Y2333_YERPG</name>
<feature type="chain" id="PRO_1000130397" description="UPF0225 protein YpAngola_A2333">
    <location>
        <begin position="1"/>
        <end position="154"/>
    </location>
</feature>
<organism>
    <name type="scientific">Yersinia pestis bv. Antiqua (strain Angola)</name>
    <dbReference type="NCBI Taxonomy" id="349746"/>
    <lineage>
        <taxon>Bacteria</taxon>
        <taxon>Pseudomonadati</taxon>
        <taxon>Pseudomonadota</taxon>
        <taxon>Gammaproteobacteria</taxon>
        <taxon>Enterobacterales</taxon>
        <taxon>Yersiniaceae</taxon>
        <taxon>Yersinia</taxon>
    </lineage>
</organism>
<sequence length="154" mass="17623">MSELCPCGSILNYHECCGPYILGTQVAAKPAILMRSRYCAYVEKNVDYLIATWHPDCHAQEWRESIIQGFTKTVWHGLTVIAETPGRHPDEAFVEFIARFTDADNAQITAMHERSRFLRIKEHWYYIDGIRPSLGRNDTCLCGSGKKHKKCCGR</sequence>
<evidence type="ECO:0000255" key="1">
    <source>
        <dbReference type="HAMAP-Rule" id="MF_00612"/>
    </source>
</evidence>
<proteinExistence type="inferred from homology"/>